<name>TRUB_SULTO</name>
<protein>
    <recommendedName>
        <fullName>Probable tRNA pseudouridine synthase B</fullName>
        <ecNumber>5.4.99.25</ecNumber>
    </recommendedName>
    <alternativeName>
        <fullName>tRNA pseudouridine(55) synthase</fullName>
        <shortName>Psi55 synthase</shortName>
    </alternativeName>
    <alternativeName>
        <fullName>tRNA pseudouridylate synthase</fullName>
    </alternativeName>
    <alternativeName>
        <fullName>tRNA-uridine isomerase</fullName>
    </alternativeName>
</protein>
<accession>Q975L5</accession>
<accession>F9VMW9</accession>
<evidence type="ECO:0000250" key="1"/>
<evidence type="ECO:0000305" key="2"/>
<comment type="function">
    <text evidence="1">Could be responsible for synthesis of pseudouridine from uracil-55 in the psi GC loop of transfer RNAs.</text>
</comment>
<comment type="catalytic activity">
    <reaction>
        <text>uridine(55) in tRNA = pseudouridine(55) in tRNA</text>
        <dbReference type="Rhea" id="RHEA:42532"/>
        <dbReference type="Rhea" id="RHEA-COMP:10101"/>
        <dbReference type="Rhea" id="RHEA-COMP:10102"/>
        <dbReference type="ChEBI" id="CHEBI:65314"/>
        <dbReference type="ChEBI" id="CHEBI:65315"/>
        <dbReference type="EC" id="5.4.99.25"/>
    </reaction>
</comment>
<comment type="similarity">
    <text evidence="2">Belongs to the pseudouridine synthase TruB family. Type 2 subfamily.</text>
</comment>
<organism>
    <name type="scientific">Sulfurisphaera tokodaii (strain DSM 16993 / JCM 10545 / NBRC 100140 / 7)</name>
    <name type="common">Sulfolobus tokodaii</name>
    <dbReference type="NCBI Taxonomy" id="273063"/>
    <lineage>
        <taxon>Archaea</taxon>
        <taxon>Thermoproteota</taxon>
        <taxon>Thermoprotei</taxon>
        <taxon>Sulfolobales</taxon>
        <taxon>Sulfolobaceae</taxon>
        <taxon>Sulfurisphaera</taxon>
    </lineage>
</organism>
<keyword id="KW-0413">Isomerase</keyword>
<keyword id="KW-1185">Reference proteome</keyword>
<keyword id="KW-0819">tRNA processing</keyword>
<feature type="chain" id="PRO_0000121972" description="Probable tRNA pseudouridine synthase B">
    <location>
        <begin position="1"/>
        <end position="337"/>
    </location>
</feature>
<feature type="domain" description="PUA">
    <location>
        <begin position="250"/>
        <end position="324"/>
    </location>
</feature>
<feature type="active site" description="Nucleophile" evidence="1">
    <location>
        <position position="83"/>
    </location>
</feature>
<sequence>MEIYDFIYKIDSFCNYSNNWNIIQDSYTNEKYGYFADKRPIEVLIKNSIINADKPPGPTSHEVAYWIKQMFKVSKAGHGGTLDPKVTGVLPIGLENATKLMSYISSSGKEYVCLMQVHCDFNIDELKQIISKFIGIIYQKPPVRSSVKRRTRKKKIYDIEILDTDKRFILLRISSDPGTYMRKLCHDIGVILGCGAHMRELRRIRSGIFTEKNLVTLQEISEALYMWKNCKDESDLRKILLPMEYATCGMPKILIDDNAVDAISYGAMLTAPGIVAYQRFRVKDTVAILTLKGELVAIGEADVDSQKLVDMKKGIVVKPKRVLMPRDIYPRSWKKHG</sequence>
<dbReference type="EC" id="5.4.99.25"/>
<dbReference type="EMBL" id="BA000023">
    <property type="protein sequence ID" value="BAK54266.1"/>
    <property type="molecule type" value="Genomic_DNA"/>
</dbReference>
<dbReference type="SMR" id="Q975L5"/>
<dbReference type="STRING" id="273063.STK_04020"/>
<dbReference type="KEGG" id="sto:STK_04020"/>
<dbReference type="PATRIC" id="fig|273063.9.peg.464"/>
<dbReference type="eggNOG" id="arCOG00987">
    <property type="taxonomic scope" value="Archaea"/>
</dbReference>
<dbReference type="Proteomes" id="UP000001015">
    <property type="component" value="Chromosome"/>
</dbReference>
<dbReference type="GO" id="GO:0003723">
    <property type="term" value="F:RNA binding"/>
    <property type="evidence" value="ECO:0007669"/>
    <property type="project" value="InterPro"/>
</dbReference>
<dbReference type="GO" id="GO:0160148">
    <property type="term" value="F:tRNA pseudouridine(55) synthase activity"/>
    <property type="evidence" value="ECO:0007669"/>
    <property type="project" value="UniProtKB-EC"/>
</dbReference>
<dbReference type="GO" id="GO:0000495">
    <property type="term" value="P:box H/ACA sno(s)RNA 3'-end processing"/>
    <property type="evidence" value="ECO:0007669"/>
    <property type="project" value="TreeGrafter"/>
</dbReference>
<dbReference type="GO" id="GO:1990481">
    <property type="term" value="P:mRNA pseudouridine synthesis"/>
    <property type="evidence" value="ECO:0007669"/>
    <property type="project" value="TreeGrafter"/>
</dbReference>
<dbReference type="GO" id="GO:0031118">
    <property type="term" value="P:rRNA pseudouridine synthesis"/>
    <property type="evidence" value="ECO:0007669"/>
    <property type="project" value="TreeGrafter"/>
</dbReference>
<dbReference type="GO" id="GO:0031120">
    <property type="term" value="P:snRNA pseudouridine synthesis"/>
    <property type="evidence" value="ECO:0007669"/>
    <property type="project" value="TreeGrafter"/>
</dbReference>
<dbReference type="GO" id="GO:0031119">
    <property type="term" value="P:tRNA pseudouridine synthesis"/>
    <property type="evidence" value="ECO:0007669"/>
    <property type="project" value="UniProtKB-UniRule"/>
</dbReference>
<dbReference type="CDD" id="cd21148">
    <property type="entry name" value="PUA_Cbf5"/>
    <property type="match status" value="1"/>
</dbReference>
<dbReference type="FunFam" id="3.30.2350.10:FF:000001">
    <property type="entry name" value="H/ACA ribonucleoprotein complex subunit CBF5"/>
    <property type="match status" value="1"/>
</dbReference>
<dbReference type="Gene3D" id="3.30.2350.10">
    <property type="entry name" value="Pseudouridine synthase"/>
    <property type="match status" value="1"/>
</dbReference>
<dbReference type="Gene3D" id="2.30.130.10">
    <property type="entry name" value="PUA domain"/>
    <property type="match status" value="1"/>
</dbReference>
<dbReference type="HAMAP" id="MF_01081">
    <property type="entry name" value="TruB_arch"/>
    <property type="match status" value="1"/>
</dbReference>
<dbReference type="InterPro" id="IPR012960">
    <property type="entry name" value="Dyskerin-like"/>
</dbReference>
<dbReference type="InterPro" id="IPR020103">
    <property type="entry name" value="PsdUridine_synth_cat_dom_sf"/>
</dbReference>
<dbReference type="InterPro" id="IPR002501">
    <property type="entry name" value="PsdUridine_synth_N"/>
</dbReference>
<dbReference type="InterPro" id="IPR002478">
    <property type="entry name" value="PUA"/>
</dbReference>
<dbReference type="InterPro" id="IPR015947">
    <property type="entry name" value="PUA-like_sf"/>
</dbReference>
<dbReference type="InterPro" id="IPR036974">
    <property type="entry name" value="PUA_sf"/>
</dbReference>
<dbReference type="InterPro" id="IPR004802">
    <property type="entry name" value="tRNA_PsdUridine_synth_B_fam"/>
</dbReference>
<dbReference type="InterPro" id="IPR026326">
    <property type="entry name" value="TruB_arch"/>
</dbReference>
<dbReference type="InterPro" id="IPR032819">
    <property type="entry name" value="TruB_C"/>
</dbReference>
<dbReference type="NCBIfam" id="TIGR00425">
    <property type="entry name" value="CBF5"/>
    <property type="match status" value="1"/>
</dbReference>
<dbReference type="NCBIfam" id="NF003280">
    <property type="entry name" value="PRK04270.1"/>
    <property type="match status" value="1"/>
</dbReference>
<dbReference type="PANTHER" id="PTHR23127">
    <property type="entry name" value="CENTROMERE/MICROTUBULE BINDING PROTEIN CBF5"/>
    <property type="match status" value="1"/>
</dbReference>
<dbReference type="PANTHER" id="PTHR23127:SF0">
    <property type="entry name" value="H_ACA RIBONUCLEOPROTEIN COMPLEX SUBUNIT DKC1"/>
    <property type="match status" value="1"/>
</dbReference>
<dbReference type="Pfam" id="PF08068">
    <property type="entry name" value="DKCLD"/>
    <property type="match status" value="1"/>
</dbReference>
<dbReference type="Pfam" id="PF01472">
    <property type="entry name" value="PUA"/>
    <property type="match status" value="1"/>
</dbReference>
<dbReference type="Pfam" id="PF16198">
    <property type="entry name" value="TruB_C_2"/>
    <property type="match status" value="1"/>
</dbReference>
<dbReference type="Pfam" id="PF01509">
    <property type="entry name" value="TruB_N"/>
    <property type="match status" value="1"/>
</dbReference>
<dbReference type="SMART" id="SM01136">
    <property type="entry name" value="DKCLD"/>
    <property type="match status" value="1"/>
</dbReference>
<dbReference type="SMART" id="SM00359">
    <property type="entry name" value="PUA"/>
    <property type="match status" value="1"/>
</dbReference>
<dbReference type="SUPFAM" id="SSF55120">
    <property type="entry name" value="Pseudouridine synthase"/>
    <property type="match status" value="1"/>
</dbReference>
<dbReference type="SUPFAM" id="SSF88697">
    <property type="entry name" value="PUA domain-like"/>
    <property type="match status" value="1"/>
</dbReference>
<dbReference type="PROSITE" id="PS50890">
    <property type="entry name" value="PUA"/>
    <property type="match status" value="1"/>
</dbReference>
<proteinExistence type="inferred from homology"/>
<reference key="1">
    <citation type="journal article" date="2001" name="DNA Res.">
        <title>Complete genome sequence of an aerobic thermoacidophilic Crenarchaeon, Sulfolobus tokodaii strain7.</title>
        <authorList>
            <person name="Kawarabayasi Y."/>
            <person name="Hino Y."/>
            <person name="Horikawa H."/>
            <person name="Jin-no K."/>
            <person name="Takahashi M."/>
            <person name="Sekine M."/>
            <person name="Baba S."/>
            <person name="Ankai A."/>
            <person name="Kosugi H."/>
            <person name="Hosoyama A."/>
            <person name="Fukui S."/>
            <person name="Nagai Y."/>
            <person name="Nishijima K."/>
            <person name="Otsuka R."/>
            <person name="Nakazawa H."/>
            <person name="Takamiya M."/>
            <person name="Kato Y."/>
            <person name="Yoshizawa T."/>
            <person name="Tanaka T."/>
            <person name="Kudoh Y."/>
            <person name="Yamazaki J."/>
            <person name="Kushida N."/>
            <person name="Oguchi A."/>
            <person name="Aoki K."/>
            <person name="Masuda S."/>
            <person name="Yanagii M."/>
            <person name="Nishimura M."/>
            <person name="Yamagishi A."/>
            <person name="Oshima T."/>
            <person name="Kikuchi H."/>
        </authorList>
    </citation>
    <scope>NUCLEOTIDE SEQUENCE [LARGE SCALE GENOMIC DNA]</scope>
    <source>
        <strain>DSM 16993 / JCM 10545 / NBRC 100140 / 7</strain>
    </source>
</reference>
<gene>
    <name type="primary">truB</name>
    <name type="ordered locus">STK_04020</name>
</gene>